<protein>
    <recommendedName>
        <fullName>Protein YIPF6</fullName>
    </recommendedName>
    <alternativeName>
        <fullName>YIP1 family member 6</fullName>
    </alternativeName>
</protein>
<feature type="chain" id="PRO_0000242671" description="Protein YIPF6">
    <location>
        <begin position="1"/>
        <end position="240"/>
    </location>
</feature>
<feature type="topological domain" description="Cytoplasmic" evidence="1">
    <location>
        <begin position="1"/>
        <end position="91"/>
    </location>
</feature>
<feature type="transmembrane region" description="Helical" evidence="2">
    <location>
        <begin position="92"/>
        <end position="112"/>
    </location>
</feature>
<feature type="topological domain" description="Lumenal" evidence="3">
    <location>
        <begin position="113"/>
        <end position="125"/>
    </location>
</feature>
<feature type="transmembrane region" description="Helical" evidence="2">
    <location>
        <begin position="126"/>
        <end position="146"/>
    </location>
</feature>
<feature type="topological domain" description="Cytoplasmic" evidence="3">
    <location>
        <begin position="147"/>
        <end position="149"/>
    </location>
</feature>
<feature type="transmembrane region" description="Helical" evidence="2">
    <location>
        <begin position="150"/>
        <end position="170"/>
    </location>
</feature>
<feature type="topological domain" description="Lumenal" evidence="3">
    <location>
        <begin position="171"/>
        <end position="172"/>
    </location>
</feature>
<feature type="transmembrane region" description="Helical" evidence="2">
    <location>
        <begin position="173"/>
        <end position="193"/>
    </location>
</feature>
<feature type="topological domain" description="Cytoplasmic" evidence="3">
    <location>
        <begin position="194"/>
        <end position="215"/>
    </location>
</feature>
<feature type="transmembrane region" description="Helical" evidence="2">
    <location>
        <begin position="216"/>
        <end position="236"/>
    </location>
</feature>
<feature type="topological domain" description="Lumenal" evidence="1">
    <location>
        <begin position="237"/>
        <end position="240"/>
    </location>
</feature>
<dbReference type="EMBL" id="BC071525">
    <property type="protein sequence ID" value="AAH71525.1"/>
    <property type="molecule type" value="mRNA"/>
</dbReference>
<dbReference type="RefSeq" id="NP_001002096.1">
    <property type="nucleotide sequence ID" value="NM_001002096.1"/>
</dbReference>
<dbReference type="FunCoup" id="Q6IQ85">
    <property type="interactions" value="2309"/>
</dbReference>
<dbReference type="STRING" id="7955.ENSDARP00000071098"/>
<dbReference type="PaxDb" id="7955-ENSDARP00000071098"/>
<dbReference type="Ensembl" id="ENSDART00000076627">
    <property type="protein sequence ID" value="ENSDARP00000071098"/>
    <property type="gene ID" value="ENSDARG00000054433"/>
</dbReference>
<dbReference type="GeneID" id="415186"/>
<dbReference type="KEGG" id="dre:415186"/>
<dbReference type="AGR" id="ZFIN:ZDB-GENE-040625-76"/>
<dbReference type="CTD" id="286451"/>
<dbReference type="ZFIN" id="ZDB-GENE-040625-76">
    <property type="gene designation" value="yipf6"/>
</dbReference>
<dbReference type="eggNOG" id="KOG2946">
    <property type="taxonomic scope" value="Eukaryota"/>
</dbReference>
<dbReference type="InParanoid" id="Q6IQ85"/>
<dbReference type="OMA" id="IKFYHVL"/>
<dbReference type="OrthoDB" id="411251at2759"/>
<dbReference type="PhylomeDB" id="Q6IQ85"/>
<dbReference type="TreeFam" id="TF314563"/>
<dbReference type="PRO" id="PR:Q6IQ85"/>
<dbReference type="Proteomes" id="UP000000437">
    <property type="component" value="Alternate scaffold 5"/>
</dbReference>
<dbReference type="Proteomes" id="UP000000437">
    <property type="component" value="Chromosome 5"/>
</dbReference>
<dbReference type="Bgee" id="ENSDARG00000054433">
    <property type="expression patterns" value="Expressed in testis and 28 other cell types or tissues"/>
</dbReference>
<dbReference type="ExpressionAtlas" id="Q6IQ85">
    <property type="expression patterns" value="baseline and differential"/>
</dbReference>
<dbReference type="GO" id="GO:0005797">
    <property type="term" value="C:Golgi medial cisterna"/>
    <property type="evidence" value="ECO:0000250"/>
    <property type="project" value="UniProtKB"/>
</dbReference>
<dbReference type="GO" id="GO:0000139">
    <property type="term" value="C:Golgi membrane"/>
    <property type="evidence" value="ECO:0007669"/>
    <property type="project" value="UniProtKB-SubCell"/>
</dbReference>
<dbReference type="GO" id="GO:0000138">
    <property type="term" value="C:Golgi trans cisterna"/>
    <property type="evidence" value="ECO:0000250"/>
    <property type="project" value="UniProtKB"/>
</dbReference>
<dbReference type="GO" id="GO:0005802">
    <property type="term" value="C:trans-Golgi network"/>
    <property type="evidence" value="ECO:0000250"/>
    <property type="project" value="UniProtKB"/>
</dbReference>
<dbReference type="GO" id="GO:0006888">
    <property type="term" value="P:endoplasmic reticulum to Golgi vesicle-mediated transport"/>
    <property type="evidence" value="ECO:0007669"/>
    <property type="project" value="InterPro"/>
</dbReference>
<dbReference type="InterPro" id="IPR045231">
    <property type="entry name" value="Yip1/4-like"/>
</dbReference>
<dbReference type="InterPro" id="IPR006977">
    <property type="entry name" value="Yip1_dom"/>
</dbReference>
<dbReference type="PANTHER" id="PTHR21236">
    <property type="entry name" value="GOLGI MEMBRANE PROTEIN YIP1"/>
    <property type="match status" value="1"/>
</dbReference>
<dbReference type="PANTHER" id="PTHR21236:SF1">
    <property type="entry name" value="PROTEIN YIPF6"/>
    <property type="match status" value="1"/>
</dbReference>
<dbReference type="Pfam" id="PF04893">
    <property type="entry name" value="Yip1"/>
    <property type="match status" value="1"/>
</dbReference>
<name>YIPF6_DANRE</name>
<comment type="subcellular location">
    <subcellularLocation>
        <location evidence="1">Golgi apparatus membrane</location>
        <topology evidence="1">Multi-pass membrane protein</topology>
    </subcellularLocation>
    <text evidence="1">Evenly distributed between cis- and trans-Golgi apparatus. Mainly localizes within medial-/trans-Golgi and trans-Golgi network (TGN), while less so within cis-Golgi.</text>
</comment>
<comment type="similarity">
    <text evidence="3">Belongs to the YIP1 family.</text>
</comment>
<reference key="1">
    <citation type="submission" date="2004-06" db="EMBL/GenBank/DDBJ databases">
        <authorList>
            <consortium name="NIH - Zebrafish Gene Collection (ZGC) project"/>
        </authorList>
    </citation>
    <scope>NUCLEOTIDE SEQUENCE [LARGE SCALE MRNA]</scope>
    <source>
        <tissue>Embryo</tissue>
    </source>
</reference>
<accession>Q6IQ85</accession>
<gene>
    <name type="primary">yipf6</name>
    <name type="ORF">zgc:86904</name>
</gene>
<keyword id="KW-0333">Golgi apparatus</keyword>
<keyword id="KW-0472">Membrane</keyword>
<keyword id="KW-1185">Reference proteome</keyword>
<keyword id="KW-0812">Transmembrane</keyword>
<keyword id="KW-1133">Transmembrane helix</keyword>
<sequence>MVVSHLNRTVTSLNELFEHHAHFAGLSDISISEDIPVEGDISVPVGSQNADNDFSTLDEPVKDTILRDLRAVGQKFVHVMYPKKSSALLRDWDLWGPLLLCVTLALMLQGGSADSEEDGRPQFAEVFVIIWFGSVIITLNSKLLGGTISFFQSLCVLGYCILPLTVAMIVCRIVLLGGSGVVSFAVRLIVVTASFSWSTFASTAFLADSQPTNRKALVVYPVFLFYFVIGWMILTFSPSH</sequence>
<proteinExistence type="evidence at transcript level"/>
<organism>
    <name type="scientific">Danio rerio</name>
    <name type="common">Zebrafish</name>
    <name type="synonym">Brachydanio rerio</name>
    <dbReference type="NCBI Taxonomy" id="7955"/>
    <lineage>
        <taxon>Eukaryota</taxon>
        <taxon>Metazoa</taxon>
        <taxon>Chordata</taxon>
        <taxon>Craniata</taxon>
        <taxon>Vertebrata</taxon>
        <taxon>Euteleostomi</taxon>
        <taxon>Actinopterygii</taxon>
        <taxon>Neopterygii</taxon>
        <taxon>Teleostei</taxon>
        <taxon>Ostariophysi</taxon>
        <taxon>Cypriniformes</taxon>
        <taxon>Danionidae</taxon>
        <taxon>Danioninae</taxon>
        <taxon>Danio</taxon>
    </lineage>
</organism>
<evidence type="ECO:0000250" key="1">
    <source>
        <dbReference type="UniProtKB" id="Q96EC8"/>
    </source>
</evidence>
<evidence type="ECO:0000255" key="2"/>
<evidence type="ECO:0000305" key="3"/>